<comment type="subcellular location">
    <subcellularLocation>
        <location evidence="2">Cell membrane</location>
        <topology evidence="2">Multi-pass membrane protein</topology>
    </subcellularLocation>
</comment>
<comment type="developmental stage">
    <text>Expressed during the stationary phase of cell growth.</text>
</comment>
<comment type="similarity">
    <text evidence="2">Belongs to the major facilitator superfamily. Sugar transporter (TC 2.A.1.1) family. CsbX subfamily.</text>
</comment>
<organism>
    <name type="scientific">Bacillus subtilis (strain 168)</name>
    <dbReference type="NCBI Taxonomy" id="224308"/>
    <lineage>
        <taxon>Bacteria</taxon>
        <taxon>Bacillati</taxon>
        <taxon>Bacillota</taxon>
        <taxon>Bacilli</taxon>
        <taxon>Bacillales</taxon>
        <taxon>Bacillaceae</taxon>
        <taxon>Bacillus</taxon>
    </lineage>
</organism>
<protein>
    <recommendedName>
        <fullName>Alpha-ketoglutarate permease</fullName>
    </recommendedName>
</protein>
<keyword id="KW-1003">Cell membrane</keyword>
<keyword id="KW-0472">Membrane</keyword>
<keyword id="KW-1185">Reference proteome</keyword>
<keyword id="KW-0812">Transmembrane</keyword>
<keyword id="KW-1133">Transmembrane helix</keyword>
<keyword id="KW-0813">Transport</keyword>
<evidence type="ECO:0000255" key="1"/>
<evidence type="ECO:0000305" key="2"/>
<proteinExistence type="evidence at protein level"/>
<name>CSBX_BACSU</name>
<feature type="chain" id="PRO_0000050494" description="Alpha-ketoglutarate permease">
    <location>
        <begin position="1"/>
        <end position="435"/>
    </location>
</feature>
<feature type="topological domain" description="Cytoplasmic" evidence="1">
    <location>
        <begin position="1"/>
        <end position="13"/>
    </location>
</feature>
<feature type="transmembrane region" description="Helical; Name=1" evidence="1">
    <location>
        <begin position="14"/>
        <end position="34"/>
    </location>
</feature>
<feature type="topological domain" description="Extracellular" evidence="1">
    <location>
        <begin position="35"/>
        <end position="56"/>
    </location>
</feature>
<feature type="transmembrane region" description="Helical; Name=2" evidence="1">
    <location>
        <begin position="57"/>
        <end position="77"/>
    </location>
</feature>
<feature type="topological domain" description="Cytoplasmic" evidence="1">
    <location>
        <begin position="78"/>
        <end position="85"/>
    </location>
</feature>
<feature type="transmembrane region" description="Helical; Name=3" evidence="1">
    <location>
        <begin position="86"/>
        <end position="106"/>
    </location>
</feature>
<feature type="topological domain" description="Extracellular" evidence="1">
    <location>
        <begin position="107"/>
        <end position="112"/>
    </location>
</feature>
<feature type="transmembrane region" description="Helical; Name=4" evidence="1">
    <location>
        <begin position="113"/>
        <end position="133"/>
    </location>
</feature>
<feature type="topological domain" description="Cytoplasmic" evidence="1">
    <location>
        <begin position="134"/>
        <end position="142"/>
    </location>
</feature>
<feature type="transmembrane region" description="Helical; Name=5" evidence="1">
    <location>
        <begin position="143"/>
        <end position="163"/>
    </location>
</feature>
<feature type="topological domain" description="Extracellular" evidence="1">
    <location>
        <begin position="164"/>
        <end position="176"/>
    </location>
</feature>
<feature type="transmembrane region" description="Helical; Name=6" evidence="1">
    <location>
        <begin position="177"/>
        <end position="197"/>
    </location>
</feature>
<feature type="topological domain" description="Cytoplasmic" evidence="1">
    <location>
        <begin position="198"/>
        <end position="228"/>
    </location>
</feature>
<feature type="transmembrane region" description="Helical; Name=7" evidence="1">
    <location>
        <begin position="229"/>
        <end position="249"/>
    </location>
</feature>
<feature type="topological domain" description="Extracellular" evidence="1">
    <location>
        <begin position="250"/>
        <end position="264"/>
    </location>
</feature>
<feature type="transmembrane region" description="Helical; Name=8" evidence="1">
    <location>
        <begin position="265"/>
        <end position="285"/>
    </location>
</feature>
<feature type="topological domain" description="Cytoplasmic" evidence="1">
    <location>
        <begin position="286"/>
        <end position="293"/>
    </location>
</feature>
<feature type="transmembrane region" description="Helical; Name=9" evidence="1">
    <location>
        <begin position="294"/>
        <end position="314"/>
    </location>
</feature>
<feature type="topological domain" description="Extracellular" evidence="1">
    <location>
        <begin position="315"/>
        <end position="320"/>
    </location>
</feature>
<feature type="transmembrane region" description="Helical; Name=10" evidence="1">
    <location>
        <begin position="321"/>
        <end position="341"/>
    </location>
</feature>
<feature type="topological domain" description="Cytoplasmic" evidence="1">
    <location>
        <begin position="342"/>
        <end position="354"/>
    </location>
</feature>
<feature type="transmembrane region" description="Helical; Name=11" evidence="1">
    <location>
        <begin position="355"/>
        <end position="375"/>
    </location>
</feature>
<feature type="topological domain" description="Extracellular" evidence="1">
    <location>
        <position position="376"/>
    </location>
</feature>
<feature type="transmembrane region" description="Helical; Name=12" evidence="1">
    <location>
        <begin position="377"/>
        <end position="397"/>
    </location>
</feature>
<feature type="topological domain" description="Cytoplasmic" evidence="1">
    <location>
        <begin position="398"/>
        <end position="435"/>
    </location>
</feature>
<feature type="sequence conflict" description="In Ref. 1; CAA63620." evidence="2" ref="1">
    <original>Q</original>
    <variation>E</variation>
    <location>
        <position position="78"/>
    </location>
</feature>
<feature type="sequence conflict" description="In Ref. 1; CAA63620." evidence="2" ref="1">
    <original>G</original>
    <variation>A</variation>
    <location>
        <position position="290"/>
    </location>
</feature>
<feature type="sequence conflict" description="In Ref. 1; CAA63620." evidence="2" ref="1">
    <location>
        <position position="307"/>
    </location>
</feature>
<feature type="sequence conflict" description="In Ref. 2; CAB75328." evidence="2" ref="2">
    <original>S</original>
    <variation>F</variation>
    <location>
        <position position="364"/>
    </location>
</feature>
<dbReference type="EMBL" id="X93081">
    <property type="protein sequence ID" value="CAA63620.1"/>
    <property type="molecule type" value="Genomic_DNA"/>
</dbReference>
<dbReference type="EMBL" id="Y15896">
    <property type="protein sequence ID" value="CAB75328.1"/>
    <property type="molecule type" value="Genomic_DNA"/>
</dbReference>
<dbReference type="EMBL" id="AL009126">
    <property type="protein sequence ID" value="CAB14736.2"/>
    <property type="molecule type" value="Genomic_DNA"/>
</dbReference>
<dbReference type="PIR" id="H69607">
    <property type="entry name" value="H69607"/>
</dbReference>
<dbReference type="RefSeq" id="NP_390654.2">
    <property type="nucleotide sequence ID" value="NC_000964.3"/>
</dbReference>
<dbReference type="RefSeq" id="WP_003246197.1">
    <property type="nucleotide sequence ID" value="NZ_OZ025638.1"/>
</dbReference>
<dbReference type="SMR" id="O05390"/>
<dbReference type="FunCoup" id="O05390">
    <property type="interactions" value="7"/>
</dbReference>
<dbReference type="STRING" id="224308.BSU27760"/>
<dbReference type="TCDB" id="2.A.1.18.3">
    <property type="family name" value="the major facilitator superfamily (mfs)"/>
</dbReference>
<dbReference type="PaxDb" id="224308-BSU27760"/>
<dbReference type="EnsemblBacteria" id="CAB14736">
    <property type="protein sequence ID" value="CAB14736"/>
    <property type="gene ID" value="BSU_27760"/>
</dbReference>
<dbReference type="GeneID" id="937527"/>
<dbReference type="KEGG" id="bsu:BSU27760"/>
<dbReference type="PATRIC" id="fig|224308.179.peg.3016"/>
<dbReference type="eggNOG" id="COG2814">
    <property type="taxonomic scope" value="Bacteria"/>
</dbReference>
<dbReference type="InParanoid" id="O05390"/>
<dbReference type="OrthoDB" id="3522477at2"/>
<dbReference type="PhylomeDB" id="O05390"/>
<dbReference type="BioCyc" id="BSUB:BSU27760-MONOMER"/>
<dbReference type="Proteomes" id="UP000001570">
    <property type="component" value="Chromosome"/>
</dbReference>
<dbReference type="GO" id="GO:0005886">
    <property type="term" value="C:plasma membrane"/>
    <property type="evidence" value="ECO:0007669"/>
    <property type="project" value="UniProtKB-SubCell"/>
</dbReference>
<dbReference type="GO" id="GO:0022857">
    <property type="term" value="F:transmembrane transporter activity"/>
    <property type="evidence" value="ECO:0007669"/>
    <property type="project" value="InterPro"/>
</dbReference>
<dbReference type="CDD" id="cd17337">
    <property type="entry name" value="MFS_CsbX"/>
    <property type="match status" value="1"/>
</dbReference>
<dbReference type="Gene3D" id="1.20.1250.20">
    <property type="entry name" value="MFS general substrate transporter like domains"/>
    <property type="match status" value="2"/>
</dbReference>
<dbReference type="InterPro" id="IPR011701">
    <property type="entry name" value="MFS"/>
</dbReference>
<dbReference type="InterPro" id="IPR020846">
    <property type="entry name" value="MFS_dom"/>
</dbReference>
<dbReference type="InterPro" id="IPR036259">
    <property type="entry name" value="MFS_trans_sf"/>
</dbReference>
<dbReference type="InterPro" id="IPR004748">
    <property type="entry name" value="Polyol_permease-like"/>
</dbReference>
<dbReference type="NCBIfam" id="TIGR00897">
    <property type="entry name" value="2A0118"/>
    <property type="match status" value="1"/>
</dbReference>
<dbReference type="PANTHER" id="PTHR23513">
    <property type="entry name" value="INTEGRAL MEMBRANE EFFLUX PROTEIN-RELATED"/>
    <property type="match status" value="1"/>
</dbReference>
<dbReference type="PANTHER" id="PTHR23513:SF6">
    <property type="entry name" value="MAJOR FACILITATOR SUPERFAMILY ASSOCIATED DOMAIN-CONTAINING PROTEIN"/>
    <property type="match status" value="1"/>
</dbReference>
<dbReference type="Pfam" id="PF07690">
    <property type="entry name" value="MFS_1"/>
    <property type="match status" value="1"/>
</dbReference>
<dbReference type="SUPFAM" id="SSF103473">
    <property type="entry name" value="MFS general substrate transporter"/>
    <property type="match status" value="1"/>
</dbReference>
<dbReference type="PROSITE" id="PS50850">
    <property type="entry name" value="MFS"/>
    <property type="match status" value="1"/>
</dbReference>
<sequence length="435" mass="47803">MNTVHAKGNVLNKIGIPSHMVWGYIGVVIFMVGDGLEQGWLSPFLVDHGLSMQQSASLFTMYGIAVTISAWLSGTFVQTWGPRKTMTVGLLAFILGSAAFIGWAIPHMYYPALLGSYALRGLGYPLFAYSFLVWVSYSTSQNILGKAVGWFWFMFTCGLNVLGPFYSSYAVPAFGEINTLWSALLFVAAGGILALFFNKDKFTPIQKQDQPKWKELSKAFTIMFENPKVGIGGVVKTINAIGQFGFAIFLPTYLARYGYSVSEWLQIWGTLFFVNIVFNIIFGAVGDKLGWRNTVMWFGGVGCGIFTLALYYTPQLIGHQYWVLMIIACCYGAALAGYVPLSALLPTLAPDNKGAAMSVLNLGSGLCAFIAPGIVSLFIGPLGAGGVIWIFAALYFFSAFLTRFLTISEQSTDVYTEERFVRENVQTNFDKTVKQ</sequence>
<accession>O05390</accession>
<accession>O32056</accession>
<gene>
    <name type="primary">csbX</name>
    <name type="ordered locus">BSU27760</name>
</gene>
<reference key="1">
    <citation type="journal article" date="1997" name="Microbiology">
        <title>BofC encodes a putative forespore regulator of the Bacillus subtilis sigma K checkpoint.</title>
        <authorList>
            <person name="Gomez M."/>
            <person name="Cutting S.M."/>
        </authorList>
    </citation>
    <scope>NUCLEOTIDE SEQUENCE [GENOMIC DNA]</scope>
    <source>
        <strain>168 / PY79</strain>
    </source>
</reference>
<reference key="2">
    <citation type="submission" date="1997-12" db="EMBL/GenBank/DDBJ databases">
        <title>A 17.8 kb segment in the spoVB-nadC region of the Bacillus subtilis 168 chromosome: sequencing and ruv operon identification.</title>
        <authorList>
            <person name="Tosato V."/>
            <person name="Bolotin A."/>
            <person name="Bertani I."/>
            <person name="Valentino I."/>
            <person name="Bruschi C.V."/>
        </authorList>
    </citation>
    <scope>NUCLEOTIDE SEQUENCE [GENOMIC DNA]</scope>
    <source>
        <strain>168</strain>
    </source>
</reference>
<reference key="3">
    <citation type="journal article" date="1997" name="Nature">
        <title>The complete genome sequence of the Gram-positive bacterium Bacillus subtilis.</title>
        <authorList>
            <person name="Kunst F."/>
            <person name="Ogasawara N."/>
            <person name="Moszer I."/>
            <person name="Albertini A.M."/>
            <person name="Alloni G."/>
            <person name="Azevedo V."/>
            <person name="Bertero M.G."/>
            <person name="Bessieres P."/>
            <person name="Bolotin A."/>
            <person name="Borchert S."/>
            <person name="Borriss R."/>
            <person name="Boursier L."/>
            <person name="Brans A."/>
            <person name="Braun M."/>
            <person name="Brignell S.C."/>
            <person name="Bron S."/>
            <person name="Brouillet S."/>
            <person name="Bruschi C.V."/>
            <person name="Caldwell B."/>
            <person name="Capuano V."/>
            <person name="Carter N.M."/>
            <person name="Choi S.-K."/>
            <person name="Codani J.-J."/>
            <person name="Connerton I.F."/>
            <person name="Cummings N.J."/>
            <person name="Daniel R.A."/>
            <person name="Denizot F."/>
            <person name="Devine K.M."/>
            <person name="Duesterhoeft A."/>
            <person name="Ehrlich S.D."/>
            <person name="Emmerson P.T."/>
            <person name="Entian K.-D."/>
            <person name="Errington J."/>
            <person name="Fabret C."/>
            <person name="Ferrari E."/>
            <person name="Foulger D."/>
            <person name="Fritz C."/>
            <person name="Fujita M."/>
            <person name="Fujita Y."/>
            <person name="Fuma S."/>
            <person name="Galizzi A."/>
            <person name="Galleron N."/>
            <person name="Ghim S.-Y."/>
            <person name="Glaser P."/>
            <person name="Goffeau A."/>
            <person name="Golightly E.J."/>
            <person name="Grandi G."/>
            <person name="Guiseppi G."/>
            <person name="Guy B.J."/>
            <person name="Haga K."/>
            <person name="Haiech J."/>
            <person name="Harwood C.R."/>
            <person name="Henaut A."/>
            <person name="Hilbert H."/>
            <person name="Holsappel S."/>
            <person name="Hosono S."/>
            <person name="Hullo M.-F."/>
            <person name="Itaya M."/>
            <person name="Jones L.-M."/>
            <person name="Joris B."/>
            <person name="Karamata D."/>
            <person name="Kasahara Y."/>
            <person name="Klaerr-Blanchard M."/>
            <person name="Klein C."/>
            <person name="Kobayashi Y."/>
            <person name="Koetter P."/>
            <person name="Koningstein G."/>
            <person name="Krogh S."/>
            <person name="Kumano M."/>
            <person name="Kurita K."/>
            <person name="Lapidus A."/>
            <person name="Lardinois S."/>
            <person name="Lauber J."/>
            <person name="Lazarevic V."/>
            <person name="Lee S.-M."/>
            <person name="Levine A."/>
            <person name="Liu H."/>
            <person name="Masuda S."/>
            <person name="Mauel C."/>
            <person name="Medigue C."/>
            <person name="Medina N."/>
            <person name="Mellado R.P."/>
            <person name="Mizuno M."/>
            <person name="Moestl D."/>
            <person name="Nakai S."/>
            <person name="Noback M."/>
            <person name="Noone D."/>
            <person name="O'Reilly M."/>
            <person name="Ogawa K."/>
            <person name="Ogiwara A."/>
            <person name="Oudega B."/>
            <person name="Park S.-H."/>
            <person name="Parro V."/>
            <person name="Pohl T.M."/>
            <person name="Portetelle D."/>
            <person name="Porwollik S."/>
            <person name="Prescott A.M."/>
            <person name="Presecan E."/>
            <person name="Pujic P."/>
            <person name="Purnelle B."/>
            <person name="Rapoport G."/>
            <person name="Rey M."/>
            <person name="Reynolds S."/>
            <person name="Rieger M."/>
            <person name="Rivolta C."/>
            <person name="Rocha E."/>
            <person name="Roche B."/>
            <person name="Rose M."/>
            <person name="Sadaie Y."/>
            <person name="Sato T."/>
            <person name="Scanlan E."/>
            <person name="Schleich S."/>
            <person name="Schroeter R."/>
            <person name="Scoffone F."/>
            <person name="Sekiguchi J."/>
            <person name="Sekowska A."/>
            <person name="Seror S.J."/>
            <person name="Serror P."/>
            <person name="Shin B.-S."/>
            <person name="Soldo B."/>
            <person name="Sorokin A."/>
            <person name="Tacconi E."/>
            <person name="Takagi T."/>
            <person name="Takahashi H."/>
            <person name="Takemaru K."/>
            <person name="Takeuchi M."/>
            <person name="Tamakoshi A."/>
            <person name="Tanaka T."/>
            <person name="Terpstra P."/>
            <person name="Tognoni A."/>
            <person name="Tosato V."/>
            <person name="Uchiyama S."/>
            <person name="Vandenbol M."/>
            <person name="Vannier F."/>
            <person name="Vassarotti A."/>
            <person name="Viari A."/>
            <person name="Wambutt R."/>
            <person name="Wedler E."/>
            <person name="Wedler H."/>
            <person name="Weitzenegger T."/>
            <person name="Winters P."/>
            <person name="Wipat A."/>
            <person name="Yamamoto H."/>
            <person name="Yamane K."/>
            <person name="Yasumoto K."/>
            <person name="Yata K."/>
            <person name="Yoshida K."/>
            <person name="Yoshikawa H.-F."/>
            <person name="Zumstein E."/>
            <person name="Yoshikawa H."/>
            <person name="Danchin A."/>
        </authorList>
    </citation>
    <scope>NUCLEOTIDE SEQUENCE [LARGE SCALE GENOMIC DNA]</scope>
    <source>
        <strain>168</strain>
    </source>
</reference>
<reference key="4">
    <citation type="journal article" date="2009" name="Microbiology">
        <title>From a consortium sequence to a unified sequence: the Bacillus subtilis 168 reference genome a decade later.</title>
        <authorList>
            <person name="Barbe V."/>
            <person name="Cruveiller S."/>
            <person name="Kunst F."/>
            <person name="Lenoble P."/>
            <person name="Meurice G."/>
            <person name="Sekowska A."/>
            <person name="Vallenet D."/>
            <person name="Wang T."/>
            <person name="Moszer I."/>
            <person name="Medigue C."/>
            <person name="Danchin A."/>
        </authorList>
    </citation>
    <scope>SEQUENCE REVISION TO 364</scope>
</reference>
<reference key="5">
    <citation type="journal article" date="1997" name="Gene">
        <title>Identification of a new sigmaB-controlled gene, csbX, in Bacillus subtilis.</title>
        <authorList>
            <person name="Gomez M."/>
            <person name="Cutting S.M."/>
        </authorList>
    </citation>
    <scope>CHARACTERIZATION OF EXPRESSION</scope>
</reference>